<reference key="1">
    <citation type="journal article" date="1992" name="Genetics">
        <title>Polymorphism and divergence in the Mst26A male accessory gland gene region in Drosophila.</title>
        <authorList>
            <person name="Aguade M."/>
            <person name="Miyashita N."/>
            <person name="Langley C.H."/>
        </authorList>
    </citation>
    <scope>NUCLEOTIDE SEQUENCE [GENOMIC DNA]</scope>
    <source>
        <strain>Robertson C340</strain>
    </source>
</reference>
<dbReference type="EMBL" id="X70898">
    <property type="protein sequence ID" value="CAA50252.1"/>
    <property type="molecule type" value="Genomic_DNA"/>
</dbReference>
<dbReference type="PIR" id="S30427">
    <property type="entry name" value="S30427"/>
</dbReference>
<dbReference type="GlyCosmos" id="P33735">
    <property type="glycosylation" value="3 sites, No reported glycans"/>
</dbReference>
<dbReference type="Proteomes" id="UP000515162">
    <property type="component" value="Unplaced"/>
</dbReference>
<dbReference type="GO" id="GO:0005576">
    <property type="term" value="C:extracellular region"/>
    <property type="evidence" value="ECO:0007669"/>
    <property type="project" value="UniProtKB-SubCell"/>
</dbReference>
<dbReference type="GO" id="GO:0007618">
    <property type="term" value="P:mating"/>
    <property type="evidence" value="ECO:0007669"/>
    <property type="project" value="InterPro"/>
</dbReference>
<dbReference type="InterPro" id="IPR004315">
    <property type="entry name" value="Male_ac_gland_sc"/>
</dbReference>
<dbReference type="Pfam" id="PF03082">
    <property type="entry name" value="MAGSP"/>
    <property type="match status" value="1"/>
</dbReference>
<evidence type="ECO:0000255" key="1"/>
<evidence type="ECO:0000256" key="2">
    <source>
        <dbReference type="SAM" id="MobiDB-lite"/>
    </source>
</evidence>
<proteinExistence type="evidence at transcript level"/>
<organism>
    <name type="scientific">Drosophila mauritiana</name>
    <name type="common">Fruit fly</name>
    <dbReference type="NCBI Taxonomy" id="7226"/>
    <lineage>
        <taxon>Eukaryota</taxon>
        <taxon>Metazoa</taxon>
        <taxon>Ecdysozoa</taxon>
        <taxon>Arthropoda</taxon>
        <taxon>Hexapoda</taxon>
        <taxon>Insecta</taxon>
        <taxon>Pterygota</taxon>
        <taxon>Neoptera</taxon>
        <taxon>Endopterygota</taxon>
        <taxon>Diptera</taxon>
        <taxon>Brachycera</taxon>
        <taxon>Muscomorpha</taxon>
        <taxon>Ephydroidea</taxon>
        <taxon>Drosophilidae</taxon>
        <taxon>Drosophila</taxon>
        <taxon>Sophophora</taxon>
    </lineage>
</organism>
<protein>
    <recommendedName>
        <fullName>Accessory gland-specific peptide 26Aa</fullName>
    </recommendedName>
    <alternativeName>
        <fullName>Male accessory gland secretory protein 355A</fullName>
    </alternativeName>
</protein>
<sequence length="250" mass="27898">MNQILLCSQILLLFFTVANCDGEHQLDSSVDLKSAVLKNVAPKNVATQAEIVKDDVALKSGKKGDYVMDIEVSDMPLDDYPINNSKSRKNSSTLPSPILTDKLNQGSNQIALKALKHRLVMEQNNNLFLRNHSVSLMNEIEARKTDIIQARQLNIDLELELESLKRKLSEMNVQNARKSTKSCKKRPSKDIAPPVNQLQEVIVKNTYRNKYLTLLTQLAQKINYEIANVNNPATDVPTGKSPSEGNPSTT</sequence>
<feature type="signal peptide" evidence="1">
    <location>
        <begin position="1"/>
        <end position="18"/>
    </location>
</feature>
<feature type="chain" id="PRO_0000021754" description="Accessory gland-specific peptide 26Aa">
    <location>
        <begin position="19"/>
        <end position="250"/>
    </location>
</feature>
<feature type="region of interest" description="Disordered" evidence="2">
    <location>
        <begin position="79"/>
        <end position="100"/>
    </location>
</feature>
<feature type="region of interest" description="Disordered" evidence="2">
    <location>
        <begin position="172"/>
        <end position="191"/>
    </location>
</feature>
<feature type="region of interest" description="Disordered" evidence="2">
    <location>
        <begin position="230"/>
        <end position="250"/>
    </location>
</feature>
<feature type="compositionally biased region" description="Polar residues" evidence="2">
    <location>
        <begin position="82"/>
        <end position="95"/>
    </location>
</feature>
<feature type="compositionally biased region" description="Basic residues" evidence="2">
    <location>
        <begin position="178"/>
        <end position="187"/>
    </location>
</feature>
<feature type="compositionally biased region" description="Polar residues" evidence="2">
    <location>
        <begin position="240"/>
        <end position="250"/>
    </location>
</feature>
<feature type="glycosylation site" description="N-linked (GlcNAc...) asparagine" evidence="1">
    <location>
        <position position="83"/>
    </location>
</feature>
<feature type="glycosylation site" description="N-linked (GlcNAc...) asparagine" evidence="1">
    <location>
        <position position="90"/>
    </location>
</feature>
<feature type="glycosylation site" description="N-linked (GlcNAc...) asparagine" evidence="1">
    <location>
        <position position="131"/>
    </location>
</feature>
<comment type="function">
    <text>This protein is transferred from male to female's hemolymph during mating, affecting egglaying and behavior after mating.</text>
</comment>
<comment type="subcellular location">
    <subcellularLocation>
        <location>Secreted</location>
        <location>Extracellular space</location>
    </subcellularLocation>
</comment>
<comment type="tissue specificity">
    <text>Main cells of the accessory glands of males.</text>
</comment>
<comment type="PTM">
    <text>Proteolytically cleaved as it is secreted and in the recipient female.</text>
</comment>
<gene>
    <name type="primary">Acp26Aa</name>
    <name type="synonym">Mst26Aa</name>
    <name type="synonym">mst355a</name>
</gene>
<accession>P33735</accession>
<keyword id="KW-0085">Behavior</keyword>
<keyword id="KW-0325">Glycoprotein</keyword>
<keyword id="KW-0964">Secreted</keyword>
<keyword id="KW-0732">Signal</keyword>
<name>MS2A_DROMA</name>